<organismHost>
    <name type="scientific">Escherichia coli</name>
    <dbReference type="NCBI Taxonomy" id="562"/>
</organismHost>
<name>NRDG_BPT4</name>
<accession>P07075</accession>
<proteinExistence type="inferred from homology"/>
<dbReference type="EC" id="1.97.1.-" evidence="2"/>
<dbReference type="EMBL" id="Y00122">
    <property type="protein sequence ID" value="CAA68312.1"/>
    <property type="molecule type" value="Genomic_DNA"/>
</dbReference>
<dbReference type="EMBL" id="AF158101">
    <property type="protein sequence ID" value="AAD42634.1"/>
    <property type="molecule type" value="Genomic_DNA"/>
</dbReference>
<dbReference type="PIR" id="G29284">
    <property type="entry name" value="Z8BPT9"/>
</dbReference>
<dbReference type="RefSeq" id="NP_049688.1">
    <property type="nucleotide sequence ID" value="NC_000866.4"/>
</dbReference>
<dbReference type="SMR" id="P07075"/>
<dbReference type="GeneID" id="1258581"/>
<dbReference type="KEGG" id="vg:1258581"/>
<dbReference type="OrthoDB" id="10167at10239"/>
<dbReference type="Proteomes" id="UP000009087">
    <property type="component" value="Segment"/>
</dbReference>
<dbReference type="GO" id="GO:0051539">
    <property type="term" value="F:4 iron, 4 sulfur cluster binding"/>
    <property type="evidence" value="ECO:0007669"/>
    <property type="project" value="UniProtKB-KW"/>
</dbReference>
<dbReference type="GO" id="GO:0043365">
    <property type="term" value="F:[formate-C-acetyltransferase]-activating enzyme activity"/>
    <property type="evidence" value="ECO:0007669"/>
    <property type="project" value="InterPro"/>
</dbReference>
<dbReference type="GO" id="GO:0046872">
    <property type="term" value="F:metal ion binding"/>
    <property type="evidence" value="ECO:0007669"/>
    <property type="project" value="UniProtKB-KW"/>
</dbReference>
<dbReference type="GO" id="GO:0004748">
    <property type="term" value="F:ribonucleoside-diphosphate reductase activity, thioredoxin disulfide as acceptor"/>
    <property type="evidence" value="ECO:0007669"/>
    <property type="project" value="TreeGrafter"/>
</dbReference>
<dbReference type="Gene3D" id="3.20.20.70">
    <property type="entry name" value="Aldolase class I"/>
    <property type="match status" value="1"/>
</dbReference>
<dbReference type="InterPro" id="IPR013785">
    <property type="entry name" value="Aldolase_TIM"/>
</dbReference>
<dbReference type="InterPro" id="IPR012837">
    <property type="entry name" value="NrdG"/>
</dbReference>
<dbReference type="InterPro" id="IPR034457">
    <property type="entry name" value="Organic_radical-activating"/>
</dbReference>
<dbReference type="InterPro" id="IPR001989">
    <property type="entry name" value="Radical_activat_CS"/>
</dbReference>
<dbReference type="InterPro" id="IPR007197">
    <property type="entry name" value="rSAM"/>
</dbReference>
<dbReference type="NCBIfam" id="TIGR02491">
    <property type="entry name" value="NrdG"/>
    <property type="match status" value="1"/>
</dbReference>
<dbReference type="PANTHER" id="PTHR30352:SF2">
    <property type="entry name" value="ANAEROBIC RIBONUCLEOSIDE-TRIPHOSPHATE REDUCTASE-ACTIVATING PROTEIN"/>
    <property type="match status" value="1"/>
</dbReference>
<dbReference type="PANTHER" id="PTHR30352">
    <property type="entry name" value="PYRUVATE FORMATE-LYASE-ACTIVATING ENZYME"/>
    <property type="match status" value="1"/>
</dbReference>
<dbReference type="Pfam" id="PF13353">
    <property type="entry name" value="Fer4_12"/>
    <property type="match status" value="1"/>
</dbReference>
<dbReference type="Pfam" id="PF04055">
    <property type="entry name" value="Radical_SAM"/>
    <property type="match status" value="1"/>
</dbReference>
<dbReference type="PIRSF" id="PIRSF000368">
    <property type="entry name" value="NrdG"/>
    <property type="match status" value="1"/>
</dbReference>
<dbReference type="SFLD" id="SFLDF00299">
    <property type="entry name" value="anaerobic_ribonucleoside-triph"/>
    <property type="match status" value="1"/>
</dbReference>
<dbReference type="SFLD" id="SFLDG01066">
    <property type="entry name" value="organic_radical-activating_enz"/>
    <property type="match status" value="1"/>
</dbReference>
<dbReference type="SUPFAM" id="SSF102114">
    <property type="entry name" value="Radical SAM enzymes"/>
    <property type="match status" value="1"/>
</dbReference>
<dbReference type="PROSITE" id="PS01087">
    <property type="entry name" value="RADICAL_ACTIVATING"/>
    <property type="match status" value="1"/>
</dbReference>
<protein>
    <recommendedName>
        <fullName evidence="2">Anaerobic ribonucleoside-triphosphate reductase-activating protein</fullName>
        <ecNumber evidence="2">1.97.1.-</ecNumber>
    </recommendedName>
    <alternativeName>
        <fullName evidence="2">Class III anaerobic ribonucleotide reductase small component</fullName>
    </alternativeName>
</protein>
<reference key="1">
    <citation type="journal article" date="1987" name="Nucleic Acids Res.">
        <title>Nucleotide sequence and primary structures of gene products coded for by the T4 genome between map positions 48.266 kb and 39.166 kb.</title>
        <authorList>
            <person name="Tomaschewski J."/>
            <person name="Rueger W."/>
        </authorList>
    </citation>
    <scope>NUCLEOTIDE SEQUENCE [GENOMIC DNA]</scope>
    <source>
        <strain>C</strain>
    </source>
</reference>
<reference key="2">
    <citation type="journal article" date="2003" name="Microbiol. Mol. Biol. Rev.">
        <title>Bacteriophage T4 genome.</title>
        <authorList>
            <person name="Miller E.S."/>
            <person name="Kutter E."/>
            <person name="Mosig G."/>
            <person name="Arisaka F."/>
            <person name="Kunisawa T."/>
            <person name="Ruger W."/>
        </authorList>
    </citation>
    <scope>NUCLEOTIDE SEQUENCE [LARGE SCALE GENOMIC DNA]</scope>
</reference>
<feature type="chain" id="PRO_0000200534" description="Anaerobic ribonucleoside-triphosphate reductase-activating protein">
    <location>
        <begin position="1"/>
        <end position="156"/>
    </location>
</feature>
<feature type="binding site" evidence="1">
    <location>
        <position position="26"/>
    </location>
    <ligand>
        <name>[4Fe-4S] cluster</name>
        <dbReference type="ChEBI" id="CHEBI:49883"/>
        <note>4Fe-4S-S-AdoMet</note>
    </ligand>
</feature>
<feature type="binding site" evidence="1">
    <location>
        <position position="30"/>
    </location>
    <ligand>
        <name>[4Fe-4S] cluster</name>
        <dbReference type="ChEBI" id="CHEBI:49883"/>
        <note>4Fe-4S-S-AdoMet</note>
    </ligand>
</feature>
<feature type="binding site" evidence="1">
    <location>
        <begin position="32"/>
        <end position="34"/>
    </location>
    <ligand>
        <name>S-adenosyl-L-methionine</name>
        <dbReference type="ChEBI" id="CHEBI:59789"/>
    </ligand>
</feature>
<feature type="binding site" evidence="1">
    <location>
        <position position="33"/>
    </location>
    <ligand>
        <name>[4Fe-4S] cluster</name>
        <dbReference type="ChEBI" id="CHEBI:49883"/>
        <note>4Fe-4S-S-AdoMet</note>
    </ligand>
</feature>
<feature type="binding site" evidence="1">
    <location>
        <position position="72"/>
    </location>
    <ligand>
        <name>S-adenosyl-L-methionine</name>
        <dbReference type="ChEBI" id="CHEBI:59789"/>
    </ligand>
</feature>
<keyword id="KW-0004">4Fe-4S</keyword>
<keyword id="KW-0408">Iron</keyword>
<keyword id="KW-0411">Iron-sulfur</keyword>
<keyword id="KW-0479">Metal-binding</keyword>
<keyword id="KW-0560">Oxidoreductase</keyword>
<keyword id="KW-1185">Reference proteome</keyword>
<keyword id="KW-0949">S-adenosyl-L-methionine</keyword>
<organism>
    <name type="scientific">Enterobacteria phage T4</name>
    <name type="common">Bacteriophage T4</name>
    <dbReference type="NCBI Taxonomy" id="10665"/>
    <lineage>
        <taxon>Viruses</taxon>
        <taxon>Duplodnaviria</taxon>
        <taxon>Heunggongvirae</taxon>
        <taxon>Uroviricota</taxon>
        <taxon>Caudoviricetes</taxon>
        <taxon>Straboviridae</taxon>
        <taxon>Tevenvirinae</taxon>
        <taxon>Tequatrovirus</taxon>
    </lineage>
</organism>
<evidence type="ECO:0000250" key="1">
    <source>
        <dbReference type="UniProtKB" id="P0A9N4"/>
    </source>
</evidence>
<evidence type="ECO:0000250" key="2">
    <source>
        <dbReference type="UniProtKB" id="P0A9N8"/>
    </source>
</evidence>
<evidence type="ECO:0000305" key="3"/>
<comment type="function">
    <text evidence="2">Activation of anaerobic ribonucleoside-triphosphate reductase under anaerobic conditions by generation of an organic free radical, using S-adenosylmethionine and reduced flavodoxin as cosubstrates to produce 5'-deoxy-adenosine.</text>
</comment>
<comment type="catalytic activity">
    <reaction evidence="2">
        <text>glycyl-[protein] + reduced [flavodoxin] + S-adenosyl-L-methionine = glycin-2-yl radical-[protein] + semiquinone [flavodoxin] + 5'-deoxyadenosine + L-methionine + H(+)</text>
        <dbReference type="Rhea" id="RHEA:61976"/>
        <dbReference type="Rhea" id="RHEA-COMP:10622"/>
        <dbReference type="Rhea" id="RHEA-COMP:14480"/>
        <dbReference type="Rhea" id="RHEA-COMP:15993"/>
        <dbReference type="Rhea" id="RHEA-COMP:15994"/>
        <dbReference type="ChEBI" id="CHEBI:15378"/>
        <dbReference type="ChEBI" id="CHEBI:17319"/>
        <dbReference type="ChEBI" id="CHEBI:29947"/>
        <dbReference type="ChEBI" id="CHEBI:32722"/>
        <dbReference type="ChEBI" id="CHEBI:57618"/>
        <dbReference type="ChEBI" id="CHEBI:57844"/>
        <dbReference type="ChEBI" id="CHEBI:59789"/>
        <dbReference type="ChEBI" id="CHEBI:140311"/>
    </reaction>
</comment>
<comment type="cofactor">
    <cofactor evidence="2">
        <name>[4Fe-4S] cluster</name>
        <dbReference type="ChEBI" id="CHEBI:49883"/>
    </cofactor>
    <text evidence="1">Binds 1 [4Fe-4S] cluster. The cluster is coordinated with 3 cysteines and an exchangeable S-adenosyl-L-methionine.</text>
</comment>
<comment type="subunit">
    <text evidence="2">Forms a tetramer composed of two NrdD and two NrdG subunits.</text>
</comment>
<comment type="similarity">
    <text evidence="3">Belongs to the organic radical-activating enzymes family.</text>
</comment>
<sequence>MNYDRIYPCDFVNGPGCRVVLFVTGCLHKCEGCYNRSTWNARNGQLFTMNTVKELASHLSKSYIQGLTLTGGDPLYPQNREEISNLVSWVKARFPEKDIWLWTGYKFEDIKQLEMLKYVDVIIDGKYEKNLPTKKLWRGSDNQRLWSNTDGVWKHD</sequence>
<gene>
    <name type="primary">NRDG</name>
    <name type="synonym">55.9</name>
</gene>